<dbReference type="EC" id="3.6.4.-"/>
<dbReference type="EMBL" id="Z75099">
    <property type="protein sequence ID" value="CAA99400.1"/>
    <property type="molecule type" value="Genomic_DNA"/>
</dbReference>
<dbReference type="EMBL" id="BK006948">
    <property type="protein sequence ID" value="DAA10963.1"/>
    <property type="molecule type" value="Genomic_DNA"/>
</dbReference>
<dbReference type="PIR" id="S67083">
    <property type="entry name" value="S67083"/>
</dbReference>
<dbReference type="RefSeq" id="NP_014834.1">
    <property type="nucleotide sequence ID" value="NM_001183610.1"/>
</dbReference>
<dbReference type="SMR" id="Q08562"/>
<dbReference type="BioGRID" id="34586">
    <property type="interactions" value="208"/>
</dbReference>
<dbReference type="DIP" id="DIP-996N"/>
<dbReference type="FunCoup" id="Q08562">
    <property type="interactions" value="107"/>
</dbReference>
<dbReference type="IntAct" id="Q08562">
    <property type="interactions" value="8"/>
</dbReference>
<dbReference type="MINT" id="Q08562"/>
<dbReference type="STRING" id="4932.YOR191W"/>
<dbReference type="iPTMnet" id="Q08562"/>
<dbReference type="PaxDb" id="4932-YOR191W"/>
<dbReference type="PeptideAtlas" id="Q08562"/>
<dbReference type="EnsemblFungi" id="YOR191W_mRNA">
    <property type="protein sequence ID" value="YOR191W"/>
    <property type="gene ID" value="YOR191W"/>
</dbReference>
<dbReference type="GeneID" id="854363"/>
<dbReference type="KEGG" id="sce:YOR191W"/>
<dbReference type="AGR" id="SGD:S000005717"/>
<dbReference type="SGD" id="S000005717">
    <property type="gene designation" value="ULS1"/>
</dbReference>
<dbReference type="VEuPathDB" id="FungiDB:YOR191W"/>
<dbReference type="eggNOG" id="KOG1001">
    <property type="taxonomic scope" value="Eukaryota"/>
</dbReference>
<dbReference type="HOGENOM" id="CLU_000315_34_1_1"/>
<dbReference type="InParanoid" id="Q08562"/>
<dbReference type="OMA" id="FWCMEQL"/>
<dbReference type="OrthoDB" id="423559at2759"/>
<dbReference type="BioCyc" id="YEAST:G3O-33700-MONOMER"/>
<dbReference type="BioGRID-ORCS" id="854363">
    <property type="hits" value="1 hit in 10 CRISPR screens"/>
</dbReference>
<dbReference type="PRO" id="PR:Q08562"/>
<dbReference type="Proteomes" id="UP000002311">
    <property type="component" value="Chromosome XV"/>
</dbReference>
<dbReference type="RNAct" id="Q08562">
    <property type="molecule type" value="protein"/>
</dbReference>
<dbReference type="GO" id="GO:0005737">
    <property type="term" value="C:cytoplasm"/>
    <property type="evidence" value="ECO:0007005"/>
    <property type="project" value="SGD"/>
</dbReference>
<dbReference type="GO" id="GO:0000776">
    <property type="term" value="C:kinetochore"/>
    <property type="evidence" value="ECO:0000314"/>
    <property type="project" value="SGD"/>
</dbReference>
<dbReference type="GO" id="GO:0005739">
    <property type="term" value="C:mitochondrion"/>
    <property type="evidence" value="ECO:0007005"/>
    <property type="project" value="SGD"/>
</dbReference>
<dbReference type="GO" id="GO:0005730">
    <property type="term" value="C:nucleolus"/>
    <property type="evidence" value="ECO:0000314"/>
    <property type="project" value="SGD"/>
</dbReference>
<dbReference type="GO" id="GO:0005634">
    <property type="term" value="C:nucleus"/>
    <property type="evidence" value="ECO:0000314"/>
    <property type="project" value="SGD"/>
</dbReference>
<dbReference type="GO" id="GO:0005524">
    <property type="term" value="F:ATP binding"/>
    <property type="evidence" value="ECO:0007669"/>
    <property type="project" value="UniProtKB-KW"/>
</dbReference>
<dbReference type="GO" id="GO:0008094">
    <property type="term" value="F:ATP-dependent activity, acting on DNA"/>
    <property type="evidence" value="ECO:0000250"/>
    <property type="project" value="SGD"/>
</dbReference>
<dbReference type="GO" id="GO:0004386">
    <property type="term" value="F:helicase activity"/>
    <property type="evidence" value="ECO:0007669"/>
    <property type="project" value="UniProtKB-KW"/>
</dbReference>
<dbReference type="GO" id="GO:0016787">
    <property type="term" value="F:hydrolase activity"/>
    <property type="evidence" value="ECO:0007669"/>
    <property type="project" value="UniProtKB-KW"/>
</dbReference>
<dbReference type="GO" id="GO:0032183">
    <property type="term" value="F:SUMO binding"/>
    <property type="evidence" value="ECO:0000353"/>
    <property type="project" value="SGD"/>
</dbReference>
<dbReference type="GO" id="GO:0008270">
    <property type="term" value="F:zinc ion binding"/>
    <property type="evidence" value="ECO:0007669"/>
    <property type="project" value="UniProtKB-KW"/>
</dbReference>
<dbReference type="GO" id="GO:0006325">
    <property type="term" value="P:chromatin organization"/>
    <property type="evidence" value="ECO:0000315"/>
    <property type="project" value="SGD"/>
</dbReference>
<dbReference type="GO" id="GO:0000724">
    <property type="term" value="P:double-strand break repair via homologous recombination"/>
    <property type="evidence" value="ECO:0000318"/>
    <property type="project" value="GO_Central"/>
</dbReference>
<dbReference type="GO" id="GO:0007533">
    <property type="term" value="P:mating type switching"/>
    <property type="evidence" value="ECO:0000315"/>
    <property type="project" value="SGD"/>
</dbReference>
<dbReference type="CDD" id="cd18008">
    <property type="entry name" value="DEXDc_SHPRH-like"/>
    <property type="match status" value="1"/>
</dbReference>
<dbReference type="CDD" id="cd23136">
    <property type="entry name" value="RING-HC_ULS1-like"/>
    <property type="match status" value="1"/>
</dbReference>
<dbReference type="CDD" id="cd18793">
    <property type="entry name" value="SF2_C_SNF"/>
    <property type="match status" value="1"/>
</dbReference>
<dbReference type="FunFam" id="3.30.40.10:FF:000754">
    <property type="entry name" value="ATP-dependent helicase ULS1"/>
    <property type="match status" value="1"/>
</dbReference>
<dbReference type="FunFam" id="3.40.50.300:FF:002297">
    <property type="entry name" value="ATP-dependent helicase ULS1"/>
    <property type="match status" value="1"/>
</dbReference>
<dbReference type="Gene3D" id="3.40.50.300">
    <property type="entry name" value="P-loop containing nucleotide triphosphate hydrolases"/>
    <property type="match status" value="1"/>
</dbReference>
<dbReference type="Gene3D" id="3.40.50.10810">
    <property type="entry name" value="Tandem AAA-ATPase domain"/>
    <property type="match status" value="1"/>
</dbReference>
<dbReference type="Gene3D" id="3.30.40.10">
    <property type="entry name" value="Zinc/RING finger domain, C3HC4 (zinc finger)"/>
    <property type="match status" value="1"/>
</dbReference>
<dbReference type="InterPro" id="IPR014001">
    <property type="entry name" value="Helicase_ATP-bd"/>
</dbReference>
<dbReference type="InterPro" id="IPR001650">
    <property type="entry name" value="Helicase_C-like"/>
</dbReference>
<dbReference type="InterPro" id="IPR027417">
    <property type="entry name" value="P-loop_NTPase"/>
</dbReference>
<dbReference type="InterPro" id="IPR038718">
    <property type="entry name" value="SNF2-like_sf"/>
</dbReference>
<dbReference type="InterPro" id="IPR049730">
    <property type="entry name" value="SNF2/RAD54-like_C"/>
</dbReference>
<dbReference type="InterPro" id="IPR000330">
    <property type="entry name" value="SNF2_N"/>
</dbReference>
<dbReference type="InterPro" id="IPR050628">
    <property type="entry name" value="SNF2_RAD54_helicase_TF"/>
</dbReference>
<dbReference type="InterPro" id="IPR001841">
    <property type="entry name" value="Znf_RING"/>
</dbReference>
<dbReference type="InterPro" id="IPR013083">
    <property type="entry name" value="Znf_RING/FYVE/PHD"/>
</dbReference>
<dbReference type="InterPro" id="IPR017907">
    <property type="entry name" value="Znf_RING_CS"/>
</dbReference>
<dbReference type="PANTHER" id="PTHR45626:SF16">
    <property type="entry name" value="ATP-DEPENDENT HELICASE ULS1"/>
    <property type="match status" value="1"/>
</dbReference>
<dbReference type="PANTHER" id="PTHR45626">
    <property type="entry name" value="TRANSCRIPTION TERMINATION FACTOR 2-RELATED"/>
    <property type="match status" value="1"/>
</dbReference>
<dbReference type="Pfam" id="PF00271">
    <property type="entry name" value="Helicase_C"/>
    <property type="match status" value="1"/>
</dbReference>
<dbReference type="Pfam" id="PF00176">
    <property type="entry name" value="SNF2-rel_dom"/>
    <property type="match status" value="1"/>
</dbReference>
<dbReference type="SMART" id="SM00487">
    <property type="entry name" value="DEXDc"/>
    <property type="match status" value="1"/>
</dbReference>
<dbReference type="SMART" id="SM00490">
    <property type="entry name" value="HELICc"/>
    <property type="match status" value="1"/>
</dbReference>
<dbReference type="SMART" id="SM00184">
    <property type="entry name" value="RING"/>
    <property type="match status" value="1"/>
</dbReference>
<dbReference type="SUPFAM" id="SSF52540">
    <property type="entry name" value="P-loop containing nucleoside triphosphate hydrolases"/>
    <property type="match status" value="2"/>
</dbReference>
<dbReference type="SUPFAM" id="SSF57850">
    <property type="entry name" value="RING/U-box"/>
    <property type="match status" value="1"/>
</dbReference>
<dbReference type="PROSITE" id="PS51192">
    <property type="entry name" value="HELICASE_ATP_BIND_1"/>
    <property type="match status" value="1"/>
</dbReference>
<dbReference type="PROSITE" id="PS51194">
    <property type="entry name" value="HELICASE_CTER"/>
    <property type="match status" value="1"/>
</dbReference>
<dbReference type="PROSITE" id="PS00518">
    <property type="entry name" value="ZF_RING_1"/>
    <property type="match status" value="1"/>
</dbReference>
<dbReference type="PROSITE" id="PS50089">
    <property type="entry name" value="ZF_RING_2"/>
    <property type="match status" value="1"/>
</dbReference>
<feature type="chain" id="PRO_0000268702" description="ATP-dependent helicase ULS1">
    <location>
        <begin position="1"/>
        <end position="1619"/>
    </location>
</feature>
<feature type="domain" description="Helicase ATP-binding" evidence="2">
    <location>
        <begin position="956"/>
        <end position="1157"/>
    </location>
</feature>
<feature type="domain" description="Helicase C-terminal" evidence="3">
    <location>
        <begin position="1447"/>
        <end position="1606"/>
    </location>
</feature>
<feature type="zinc finger region" description="RING-type" evidence="1">
    <location>
        <begin position="1330"/>
        <end position="1386"/>
    </location>
</feature>
<feature type="region of interest" description="Disordered" evidence="4">
    <location>
        <begin position="86"/>
        <end position="123"/>
    </location>
</feature>
<feature type="region of interest" description="Disordered" evidence="4">
    <location>
        <begin position="200"/>
        <end position="279"/>
    </location>
</feature>
<feature type="region of interest" description="Disordered" evidence="4">
    <location>
        <begin position="347"/>
        <end position="371"/>
    </location>
</feature>
<feature type="region of interest" description="Disordered" evidence="4">
    <location>
        <begin position="429"/>
        <end position="450"/>
    </location>
</feature>
<feature type="short sequence motif" description="SUMO interacting motif; type a 1">
    <location>
        <begin position="7"/>
        <end position="10"/>
    </location>
</feature>
<feature type="short sequence motif" description="SUMO interacting motif; type b 1">
    <location>
        <begin position="371"/>
        <end position="378"/>
    </location>
</feature>
<feature type="short sequence motif" description="SUMO interacting motif; type a 2">
    <location>
        <begin position="470"/>
        <end position="473"/>
    </location>
</feature>
<feature type="short sequence motif" description="SUMO interacting motif; type b 2">
    <location>
        <begin position="543"/>
        <end position="550"/>
    </location>
</feature>
<feature type="compositionally biased region" description="Polar residues" evidence="4">
    <location>
        <begin position="86"/>
        <end position="102"/>
    </location>
</feature>
<feature type="compositionally biased region" description="Basic and acidic residues" evidence="4">
    <location>
        <begin position="103"/>
        <end position="118"/>
    </location>
</feature>
<feature type="compositionally biased region" description="Polar residues" evidence="4">
    <location>
        <begin position="200"/>
        <end position="210"/>
    </location>
</feature>
<feature type="compositionally biased region" description="Basic and acidic residues" evidence="4">
    <location>
        <begin position="211"/>
        <end position="226"/>
    </location>
</feature>
<feature type="compositionally biased region" description="Polar residues" evidence="4">
    <location>
        <begin position="242"/>
        <end position="259"/>
    </location>
</feature>
<feature type="compositionally biased region" description="Polar residues" evidence="4">
    <location>
        <begin position="269"/>
        <end position="279"/>
    </location>
</feature>
<feature type="compositionally biased region" description="Basic and acidic residues" evidence="4">
    <location>
        <begin position="353"/>
        <end position="366"/>
    </location>
</feature>
<feature type="binding site" evidence="2">
    <location>
        <begin position="969"/>
        <end position="976"/>
    </location>
    <ligand>
        <name>ATP</name>
        <dbReference type="ChEBI" id="CHEBI:30616"/>
    </ligand>
</feature>
<feature type="modified residue" description="Phosphoserine" evidence="10">
    <location>
        <position position="121"/>
    </location>
</feature>
<reference key="1">
    <citation type="journal article" date="1997" name="Nature">
        <title>The nucleotide sequence of Saccharomyces cerevisiae chromosome XV.</title>
        <authorList>
            <person name="Dujon B."/>
            <person name="Albermann K."/>
            <person name="Aldea M."/>
            <person name="Alexandraki D."/>
            <person name="Ansorge W."/>
            <person name="Arino J."/>
            <person name="Benes V."/>
            <person name="Bohn C."/>
            <person name="Bolotin-Fukuhara M."/>
            <person name="Bordonne R."/>
            <person name="Boyer J."/>
            <person name="Camasses A."/>
            <person name="Casamayor A."/>
            <person name="Casas C."/>
            <person name="Cheret G."/>
            <person name="Cziepluch C."/>
            <person name="Daignan-Fornier B."/>
            <person name="Dang V.-D."/>
            <person name="de Haan M."/>
            <person name="Delius H."/>
            <person name="Durand P."/>
            <person name="Fairhead C."/>
            <person name="Feldmann H."/>
            <person name="Gaillon L."/>
            <person name="Galisson F."/>
            <person name="Gamo F.-J."/>
            <person name="Gancedo C."/>
            <person name="Goffeau A."/>
            <person name="Goulding S.E."/>
            <person name="Grivell L.A."/>
            <person name="Habbig B."/>
            <person name="Hand N.J."/>
            <person name="Hani J."/>
            <person name="Hattenhorst U."/>
            <person name="Hebling U."/>
            <person name="Hernando Y."/>
            <person name="Herrero E."/>
            <person name="Heumann K."/>
            <person name="Hiesel R."/>
            <person name="Hilger F."/>
            <person name="Hofmann B."/>
            <person name="Hollenberg C.P."/>
            <person name="Hughes B."/>
            <person name="Jauniaux J.-C."/>
            <person name="Kalogeropoulos A."/>
            <person name="Katsoulou C."/>
            <person name="Kordes E."/>
            <person name="Lafuente M.J."/>
            <person name="Landt O."/>
            <person name="Louis E.J."/>
            <person name="Maarse A.C."/>
            <person name="Madania A."/>
            <person name="Mannhaupt G."/>
            <person name="Marck C."/>
            <person name="Martin R.P."/>
            <person name="Mewes H.-W."/>
            <person name="Michaux G."/>
            <person name="Paces V."/>
            <person name="Parle-McDermott A.G."/>
            <person name="Pearson B.M."/>
            <person name="Perrin A."/>
            <person name="Pettersson B."/>
            <person name="Poch O."/>
            <person name="Pohl T.M."/>
            <person name="Poirey R."/>
            <person name="Portetelle D."/>
            <person name="Pujol A."/>
            <person name="Purnelle B."/>
            <person name="Ramezani Rad M."/>
            <person name="Rechmann S."/>
            <person name="Schwager C."/>
            <person name="Schweizer M."/>
            <person name="Sor F."/>
            <person name="Sterky F."/>
            <person name="Tarassov I.A."/>
            <person name="Teodoru C."/>
            <person name="Tettelin H."/>
            <person name="Thierry A."/>
            <person name="Tobiasch E."/>
            <person name="Tzermia M."/>
            <person name="Uhlen M."/>
            <person name="Unseld M."/>
            <person name="Valens M."/>
            <person name="Vandenbol M."/>
            <person name="Vetter I."/>
            <person name="Vlcek C."/>
            <person name="Voet M."/>
            <person name="Volckaert G."/>
            <person name="Voss H."/>
            <person name="Wambutt R."/>
            <person name="Wedler H."/>
            <person name="Wiemann S."/>
            <person name="Winsor B."/>
            <person name="Wolfe K.H."/>
            <person name="Zollner A."/>
            <person name="Zumstein E."/>
            <person name="Kleine K."/>
        </authorList>
    </citation>
    <scope>NUCLEOTIDE SEQUENCE [LARGE SCALE GENOMIC DNA]</scope>
    <source>
        <strain>ATCC 204508 / S288c</strain>
    </source>
</reference>
<reference key="2">
    <citation type="journal article" date="2014" name="G3 (Bethesda)">
        <title>The reference genome sequence of Saccharomyces cerevisiae: Then and now.</title>
        <authorList>
            <person name="Engel S.R."/>
            <person name="Dietrich F.S."/>
            <person name="Fisk D.G."/>
            <person name="Binkley G."/>
            <person name="Balakrishnan R."/>
            <person name="Costanzo M.C."/>
            <person name="Dwight S.S."/>
            <person name="Hitz B.C."/>
            <person name="Karra K."/>
            <person name="Nash R.S."/>
            <person name="Weng S."/>
            <person name="Wong E.D."/>
            <person name="Lloyd P."/>
            <person name="Skrzypek M.S."/>
            <person name="Miyasato S.R."/>
            <person name="Simison M."/>
            <person name="Cherry J.M."/>
        </authorList>
    </citation>
    <scope>GENOME REANNOTATION</scope>
    <source>
        <strain>ATCC 204508 / S288c</strain>
    </source>
</reference>
<reference key="3">
    <citation type="journal article" date="1997" name="Mol. Cell. Biol.">
        <title>Identification of a member of a DNA-dependent ATPase family that causes interference with silencing.</title>
        <authorList>
            <person name="Zhang Z."/>
            <person name="Buchman A.R."/>
        </authorList>
    </citation>
    <scope>FUNCTION</scope>
    <scope>INTERACTION WITH SIR4</scope>
</reference>
<reference key="4">
    <citation type="journal article" date="2003" name="Nature">
        <title>Global analysis of protein localization in budding yeast.</title>
        <authorList>
            <person name="Huh W.-K."/>
            <person name="Falvo J.V."/>
            <person name="Gerke L.C."/>
            <person name="Carroll A.S."/>
            <person name="Howson R.W."/>
            <person name="Weissman J.S."/>
            <person name="O'Shea E.K."/>
        </authorList>
    </citation>
    <scope>SUBCELLULAR LOCATION [LARGE SCALE ANALYSIS]</scope>
</reference>
<reference key="5">
    <citation type="journal article" date="2007" name="J. Biol. Chem.">
        <title>Ubiquitin-dependent proteolytic control of SUMO conjugates.</title>
        <authorList>
            <person name="Uzunova K."/>
            <person name="Goettsche K."/>
            <person name="Miteva M."/>
            <person name="Weisshaar S.R."/>
            <person name="Glanemann C."/>
            <person name="Schnellhardt M."/>
            <person name="Niessen M."/>
            <person name="Scheel H."/>
            <person name="Hofmann K."/>
            <person name="Johnson E.S."/>
            <person name="Praefcke G.J.K."/>
            <person name="Dohmen R.J."/>
        </authorList>
    </citation>
    <scope>FUNCTION</scope>
    <scope>INTERACTION WITH UBC4 AND SMT3</scope>
</reference>
<reference key="6">
    <citation type="journal article" date="2008" name="Biosci. Biotechnol. Biochem.">
        <title>SUMO mediates interaction of Ebp2p, the yeast homolog of Epstein-Barr virus nuclear antigen 1-binding protein 2, with a RING finger protein Ris1p.</title>
        <authorList>
            <person name="Shirai C."/>
            <person name="Mizuta K."/>
        </authorList>
    </citation>
    <scope>INTERACTION WITH EBP2; CDC3 AND CDC11</scope>
    <scope>SUBCELLULAR LOCATION</scope>
</reference>
<reference key="7">
    <citation type="journal article" date="2008" name="Mol. Cell. Proteomics">
        <title>A multidimensional chromatography technology for in-depth phosphoproteome analysis.</title>
        <authorList>
            <person name="Albuquerque C.P."/>
            <person name="Smolka M.B."/>
            <person name="Payne S.H."/>
            <person name="Bafna V."/>
            <person name="Eng J."/>
            <person name="Zhou H."/>
        </authorList>
    </citation>
    <scope>IDENTIFICATION BY MASS SPECTROMETRY [LARGE SCALE ANALYSIS]</scope>
</reference>
<reference key="8">
    <citation type="journal article" date="2009" name="Science">
        <title>Global analysis of Cdk1 substrate phosphorylation sites provides insights into evolution.</title>
        <authorList>
            <person name="Holt L.J."/>
            <person name="Tuch B.B."/>
            <person name="Villen J."/>
            <person name="Johnson A.D."/>
            <person name="Gygi S.P."/>
            <person name="Morgan D.O."/>
        </authorList>
    </citation>
    <scope>PHOSPHORYLATION [LARGE SCALE ANALYSIS] AT SER-121</scope>
    <scope>IDENTIFICATION BY MASS SPECTROMETRY [LARGE SCALE ANALYSIS]</scope>
</reference>
<organism>
    <name type="scientific">Saccharomyces cerevisiae (strain ATCC 204508 / S288c)</name>
    <name type="common">Baker's yeast</name>
    <dbReference type="NCBI Taxonomy" id="559292"/>
    <lineage>
        <taxon>Eukaryota</taxon>
        <taxon>Fungi</taxon>
        <taxon>Dikarya</taxon>
        <taxon>Ascomycota</taxon>
        <taxon>Saccharomycotina</taxon>
        <taxon>Saccharomycetes</taxon>
        <taxon>Saccharomycetales</taxon>
        <taxon>Saccharomycetaceae</taxon>
        <taxon>Saccharomyces</taxon>
    </lineage>
</organism>
<accession>Q08562</accession>
<accession>D6W2P7</accession>
<sequence>MAAVPTIDLTLADSDNEDIFHSFSSSTSVDKIDIRKENGKLRMAGLEVAQSNDDAARQAFHVFKTNISNNETFDTILSKSKTITDSTFNNEKSSNEVKQQQVLKEETMGSSNDEKKTQESSPSAEMIKLFYENDDVPLSDSFKQKEEGKRINQDEQVKENICGISSSYVSKDYDGVEDDFEPNTCQDSNLDFQEEKLNLNNKPSQQQFSDPETKDNSLKSENKDQIKGVTTTSYRDLPIESSAFQDSETQNNSKNTIPNIVNEKRTPALPSNLSSVESSLKNETAKVEGKTTVRLPGLQNNVALLEQEQSELFKHFSEQPVDISDFGRKIKRKHSGDFADNKILKRPILPSKNMDHTTHNSHDSEQKNSSIIILSDEDESGAGINDIESPLKVSEPNTADALRSSVPEVISLLDLPNIDLNNSVIKEASGSNSIPTSETDAQSSSSSVLQGTIMTEQATQSSQHECNSSLDTLKKNHQKLLKDLNSRESELRNALSCCKTNSEILRRKLSRREKEVSDAEKHWQLLLTSMARGGRTISSTQQILVDEAENQLNKLKEKRQLTKSKLDSINLKMYNYNEQWKSFVHSKNINLQKSLAALERSARDSKASATVNKRNECLAEKEKLDQMLKEGTLSFSTYKQLTGEIQQKLNDLKLGDQRTTDINSVLPIVRQPLAKRDLFIKSIDTAKDLLAKNTSRTEMTKRILYRHLDNLVSYKNFFEDGRSLIDINRRHVAHESAQILFTNGVKMPIVFETLQDYGIKFSNPAIVNPDRRAQYFKSIEVARDLISKSTRSEDAKRKITRFLNIIEEFRKDIDTGFPPTPLKREGVGKAVVGLRQQGLKMDRLYENLRRYKIPITSEELLQQSYLFPVNADQRPPSNWNIVENTEDTSSTANDLSMQDEFHISNMHAAEDQEQIRALLENVKQSESIIDGEALTPEDMTVNLLKHQRLGLHWLLQVENSAKKGGLLADDMGLGKTIQAIALMLANRSEESKCKTNLIVAPVSVLRVWKGELETKVKKRAKFTTFIFGGSGNGKVKHWRDLARYDAVLVSYQTLANEFKKHWPKKLDGEQNQLPAVPHIQALNRLKTSNEYYSPFFCNDSTFYRILLDEGQNIKNKNTRASKACCTINGMYRWVLSGTPIQNSMDELYSLIRFLRIPPYHKEQRFKLDIGRFFQRNKQYQYDNEDRKNALRKVRVLLNAIMLRRSKADKIDGKPLLELPPKIVEVDESRLKGEELKFYTALESKNQALAKKLLNNSTRGSYSSVLTLLLRLRQACCHSELVVMGEKKAEGTKVANGKSFEDDWLRLYYKITHMSGEAQAQVITSMNSMTCFWCMEQLEPEAMSVLTGCGHLICDTCIEPFIEESSMLPQAKKTKGGAFAIPCKDCQRLTNEKDIVSHKLYDQVINQGFTEEDLHAEYLSEMEKQKIQQKNVYVPNFESLEPSTKIEQCIQVIQRVFDESATEKIIIFSQFTTFFEILEHFLKNKLNFPYLKYIGSMNAQRRSDVINEFYRDPEKRILLISMKAGNSGLTLTCANHVVIVDPFWNPYVEEQAQDRCYRISQTKKVQVHKLFIKDSVEDRISELQKRKKEMVDSAMDPGKIKEVNSLGRRELGFLFGLNAL</sequence>
<comment type="function">
    <text evidence="6 8">ATP-dependent helicase involved mating type switching and in silencing interference through its interaction with the silencing regulator SIR4. Cooperates with UBC4 and UBC5 to mediate ubiquitination of SUMO conjugates.</text>
</comment>
<comment type="subunit">
    <text evidence="6 7 8">Interacts with CDC3, CDC11, EBP2, SIR4, UBC4 and SUMO/SMT3.</text>
</comment>
<comment type="subcellular location">
    <subcellularLocation>
        <location evidence="5 7">Nucleus</location>
    </subcellularLocation>
</comment>
<comment type="similarity">
    <text evidence="9">Belongs to the SNF2/RAD54 helicase family.</text>
</comment>
<keyword id="KW-0010">Activator</keyword>
<keyword id="KW-0067">ATP-binding</keyword>
<keyword id="KW-0347">Helicase</keyword>
<keyword id="KW-0378">Hydrolase</keyword>
<keyword id="KW-0479">Metal-binding</keyword>
<keyword id="KW-0547">Nucleotide-binding</keyword>
<keyword id="KW-0539">Nucleus</keyword>
<keyword id="KW-0597">Phosphoprotein</keyword>
<keyword id="KW-1185">Reference proteome</keyword>
<keyword id="KW-0804">Transcription</keyword>
<keyword id="KW-0805">Transcription regulation</keyword>
<keyword id="KW-0833">Ubl conjugation pathway</keyword>
<keyword id="KW-0862">Zinc</keyword>
<keyword id="KW-0863">Zinc-finger</keyword>
<proteinExistence type="evidence at protein level"/>
<evidence type="ECO:0000255" key="1">
    <source>
        <dbReference type="PROSITE-ProRule" id="PRU00175"/>
    </source>
</evidence>
<evidence type="ECO:0000255" key="2">
    <source>
        <dbReference type="PROSITE-ProRule" id="PRU00541"/>
    </source>
</evidence>
<evidence type="ECO:0000255" key="3">
    <source>
        <dbReference type="PROSITE-ProRule" id="PRU00542"/>
    </source>
</evidence>
<evidence type="ECO:0000256" key="4">
    <source>
        <dbReference type="SAM" id="MobiDB-lite"/>
    </source>
</evidence>
<evidence type="ECO:0000269" key="5">
    <source>
    </source>
</evidence>
<evidence type="ECO:0000269" key="6">
    <source>
    </source>
</evidence>
<evidence type="ECO:0000269" key="7">
    <source>
    </source>
</evidence>
<evidence type="ECO:0000269" key="8">
    <source>
    </source>
</evidence>
<evidence type="ECO:0000305" key="9"/>
<evidence type="ECO:0007744" key="10">
    <source>
    </source>
</evidence>
<gene>
    <name type="primary">ULS1</name>
    <name type="synonym">DIS1</name>
    <name type="synonym">RIS1</name>
    <name type="synonym">TID4</name>
    <name type="ordered locus">YOR191W</name>
</gene>
<protein>
    <recommendedName>
        <fullName>ATP-dependent helicase ULS1</fullName>
        <ecNumber>3.6.4.-</ecNumber>
    </recommendedName>
    <alternativeName>
        <fullName>Role in silencing protein 1</fullName>
    </alternativeName>
    <alternativeName>
        <fullName>Ubiquitin ligase for SUMO conjugates protein 1</fullName>
    </alternativeName>
</protein>
<name>ULS1_YEAST</name>